<evidence type="ECO:0000305" key="1"/>
<organism>
    <name type="scientific">Salmonella typhimurium (strain LT2 / SGSC1412 / ATCC 700720)</name>
    <dbReference type="NCBI Taxonomy" id="99287"/>
    <lineage>
        <taxon>Bacteria</taxon>
        <taxon>Pseudomonadati</taxon>
        <taxon>Pseudomonadota</taxon>
        <taxon>Gammaproteobacteria</taxon>
        <taxon>Enterobacterales</taxon>
        <taxon>Enterobacteriaceae</taxon>
        <taxon>Salmonella</taxon>
    </lineage>
</organism>
<gene>
    <name type="primary">rfbH</name>
    <name type="ordered locus">STM2090</name>
</gene>
<comment type="cofactor">
    <cofactor evidence="1">
        <name>pyridoxal 5'-phosphate</name>
        <dbReference type="ChEBI" id="CHEBI:597326"/>
    </cofactor>
</comment>
<comment type="pathway">
    <text>Bacterial outer membrane biogenesis; LPS O-antigen biosynthesis.</text>
</comment>
<comment type="similarity">
    <text evidence="1">Belongs to the DegT/DnrJ/EryC1 family.</text>
</comment>
<name>RFBH_SALTY</name>
<dbReference type="EMBL" id="X56793">
    <property type="protein sequence ID" value="CAA40122.1"/>
    <property type="molecule type" value="Genomic_DNA"/>
</dbReference>
<dbReference type="EMBL" id="AE006468">
    <property type="protein sequence ID" value="AAL20994.1"/>
    <property type="molecule type" value="Genomic_DNA"/>
</dbReference>
<dbReference type="PIR" id="S15306">
    <property type="entry name" value="S15306"/>
</dbReference>
<dbReference type="RefSeq" id="NP_461035.1">
    <property type="nucleotide sequence ID" value="NC_003197.2"/>
</dbReference>
<dbReference type="RefSeq" id="WP_000126349.1">
    <property type="nucleotide sequence ID" value="NC_003197.2"/>
</dbReference>
<dbReference type="SMR" id="P26398"/>
<dbReference type="STRING" id="99287.STM2090"/>
<dbReference type="PaxDb" id="99287-STM2090"/>
<dbReference type="GeneID" id="1253611"/>
<dbReference type="KEGG" id="stm:STM2090"/>
<dbReference type="PATRIC" id="fig|99287.12.peg.2212"/>
<dbReference type="HOGENOM" id="CLU_033332_5_0_6"/>
<dbReference type="OMA" id="VESFRDW"/>
<dbReference type="PhylomeDB" id="P26398"/>
<dbReference type="BioCyc" id="SENT99287:STM2090-MONOMER"/>
<dbReference type="UniPathway" id="UPA00281"/>
<dbReference type="Proteomes" id="UP000001014">
    <property type="component" value="Chromosome"/>
</dbReference>
<dbReference type="GO" id="GO:0030170">
    <property type="term" value="F:pyridoxal phosphate binding"/>
    <property type="evidence" value="ECO:0000318"/>
    <property type="project" value="GO_Central"/>
</dbReference>
<dbReference type="GO" id="GO:0008483">
    <property type="term" value="F:transaminase activity"/>
    <property type="evidence" value="ECO:0000318"/>
    <property type="project" value="GO_Central"/>
</dbReference>
<dbReference type="GO" id="GO:0009243">
    <property type="term" value="P:O antigen biosynthetic process"/>
    <property type="evidence" value="ECO:0007669"/>
    <property type="project" value="UniProtKB-UniPathway"/>
</dbReference>
<dbReference type="GO" id="GO:0000271">
    <property type="term" value="P:polysaccharide biosynthetic process"/>
    <property type="evidence" value="ECO:0000318"/>
    <property type="project" value="GO_Central"/>
</dbReference>
<dbReference type="CDD" id="cd00616">
    <property type="entry name" value="AHBA_syn"/>
    <property type="match status" value="1"/>
</dbReference>
<dbReference type="FunFam" id="3.40.640.10:FF:000079">
    <property type="entry name" value="LPS biosynthesis protein"/>
    <property type="match status" value="1"/>
</dbReference>
<dbReference type="FunFam" id="3.90.1150.10:FF:000068">
    <property type="entry name" value="LPS biosynthesis protein"/>
    <property type="match status" value="1"/>
</dbReference>
<dbReference type="Gene3D" id="3.90.1150.10">
    <property type="entry name" value="Aspartate Aminotransferase, domain 1"/>
    <property type="match status" value="1"/>
</dbReference>
<dbReference type="Gene3D" id="3.40.640.10">
    <property type="entry name" value="Type I PLP-dependent aspartate aminotransferase-like (Major domain)"/>
    <property type="match status" value="1"/>
</dbReference>
<dbReference type="InterPro" id="IPR000653">
    <property type="entry name" value="DegT/StrS_aminotransferase"/>
</dbReference>
<dbReference type="InterPro" id="IPR015424">
    <property type="entry name" value="PyrdxlP-dep_Trfase"/>
</dbReference>
<dbReference type="InterPro" id="IPR015421">
    <property type="entry name" value="PyrdxlP-dep_Trfase_major"/>
</dbReference>
<dbReference type="InterPro" id="IPR015422">
    <property type="entry name" value="PyrdxlP-dep_Trfase_small"/>
</dbReference>
<dbReference type="NCBIfam" id="NF011936">
    <property type="entry name" value="PRK15407.1"/>
    <property type="match status" value="1"/>
</dbReference>
<dbReference type="PANTHER" id="PTHR30244:SF34">
    <property type="entry name" value="DTDP-4-AMINO-4,6-DIDEOXYGALACTOSE TRANSAMINASE"/>
    <property type="match status" value="1"/>
</dbReference>
<dbReference type="PANTHER" id="PTHR30244">
    <property type="entry name" value="TRANSAMINASE"/>
    <property type="match status" value="1"/>
</dbReference>
<dbReference type="Pfam" id="PF01041">
    <property type="entry name" value="DegT_DnrJ_EryC1"/>
    <property type="match status" value="1"/>
</dbReference>
<dbReference type="PIRSF" id="PIRSF000390">
    <property type="entry name" value="PLP_StrS"/>
    <property type="match status" value="1"/>
</dbReference>
<dbReference type="SUPFAM" id="SSF53383">
    <property type="entry name" value="PLP-dependent transferases"/>
    <property type="match status" value="1"/>
</dbReference>
<keyword id="KW-0448">Lipopolysaccharide biosynthesis</keyword>
<keyword id="KW-0663">Pyridoxal phosphate</keyword>
<keyword id="KW-1185">Reference proteome</keyword>
<feature type="chain" id="PRO_0000110015" description="Lipopolysaccharide biosynthesis protein RfbH">
    <location>
        <begin position="1"/>
        <end position="437"/>
    </location>
</feature>
<sequence length="437" mass="48104">MTANNLREQISQLVAQYANEALSPKPFVAGTSVVPPSGKVIGAKELQLMVEASLDGWLTTGRFNDAFEKKLGEFIGVPHVLTTTSGSSANLLALTALTSPKLGERALKPGDEVITVAAGFPTTVNPAIQNGLIPVFVDVDIPTYNIDASLIEAAVTEKSKAIMIAHTLGNAFNLSEVRRIADKYNLWLIEDCCDALGTTYEGQMVGTFGDIGTVSFYPAHHITMGEGGAVFTKSGELKKIIESFRDWGRDCYCAPGCDNTCGKRFGQQLGSLPQGYDHKYTYSHLGYNLKITDMQAACGLAQLERVEEFVEQRKANFSYLKQGLQSCTEFLELPEATEKSDPSWFGFPITLKETSGVNRVELVKFLDEAKIGTRLLFAGNLIRQPYFANVKYRVVGELTNTDRIMNQTFWIGIYPGLTTEHLDYVVSKFEEFFGLNF</sequence>
<proteinExistence type="inferred from homology"/>
<accession>P26398</accession>
<protein>
    <recommendedName>
        <fullName>Lipopolysaccharide biosynthesis protein RfbH</fullName>
    </recommendedName>
</protein>
<reference key="1">
    <citation type="journal article" date="1991" name="Mol. Microbiol.">
        <title>Structure and sequence of the rfb (O antigen) gene cluster of Salmonella serovar typhimurium (strain LT2).</title>
        <authorList>
            <person name="Jiang X.-M."/>
            <person name="Neal B."/>
            <person name="Santiago F."/>
            <person name="Lee S.J."/>
            <person name="Romana L.K."/>
            <person name="Reeves P.R."/>
        </authorList>
    </citation>
    <scope>NUCLEOTIDE SEQUENCE [GENOMIC DNA]</scope>
    <source>
        <strain>LT2</strain>
    </source>
</reference>
<reference key="2">
    <citation type="journal article" date="2001" name="Nature">
        <title>Complete genome sequence of Salmonella enterica serovar Typhimurium LT2.</title>
        <authorList>
            <person name="McClelland M."/>
            <person name="Sanderson K.E."/>
            <person name="Spieth J."/>
            <person name="Clifton S.W."/>
            <person name="Latreille P."/>
            <person name="Courtney L."/>
            <person name="Porwollik S."/>
            <person name="Ali J."/>
            <person name="Dante M."/>
            <person name="Du F."/>
            <person name="Hou S."/>
            <person name="Layman D."/>
            <person name="Leonard S."/>
            <person name="Nguyen C."/>
            <person name="Scott K."/>
            <person name="Holmes A."/>
            <person name="Grewal N."/>
            <person name="Mulvaney E."/>
            <person name="Ryan E."/>
            <person name="Sun H."/>
            <person name="Florea L."/>
            <person name="Miller W."/>
            <person name="Stoneking T."/>
            <person name="Nhan M."/>
            <person name="Waterston R."/>
            <person name="Wilson R.K."/>
        </authorList>
    </citation>
    <scope>NUCLEOTIDE SEQUENCE [LARGE SCALE GENOMIC DNA]</scope>
    <source>
        <strain>LT2 / SGSC1412 / ATCC 700720</strain>
    </source>
</reference>